<comment type="function">
    <text evidence="1 4 5">Enhancer-binding elongation factor that specifically binds enhancers in embryonic stem cells (ES cells), marks them, and is required for their future activation during stem cell specification. Does not only bind to enhancer regions of active genes, but also marks the enhancers that are in a poised or inactive state in ES cells and is required for establishing proper RNA polymerase II occupancy at developmentally regulated genes in a cohesin-dependent manner. Probably required for priming developmentally regulated genes for later recruitment of the super elongation complex (SEC), for transcriptional activation during differentiation. Required for recruitment of P-TEFb within SEC during differentiation. Probably preloaded on germ cell chromatin, suggesting that it may prime gene activation by marking enhancers as early as in the germ cells. Promoting epithelial-mesenchymal transition (EMT) (By similarity). Elongation factor component of the super elongation complex (SEC), a complex required to increase the catalytic rate of RNA polymerase II transcription by suppressing transient pausing by the polymerase at multiple sites along the DNA. Component of the little elongation complex (LEC), a complex required to regulate small nuclear RNA (snRNA) gene transcription by RNA polymerase II and III (PubMed:22195968).</text>
</comment>
<comment type="subunit">
    <text evidence="1 5">Interacts with AFF4 (By similarity). Component of the super elongation complex (SEC), at least composed of EAF1, EAF2, CDK9, MLLT3/AF9, AFF (AFF1 or AFF4), the P-TEFb complex and ELL (ELL, ELL2 or ELL3). Component of the little elongation complex (LEC), at least composed of ELL (ELL, ELL2 or ELL3), ZC3H8, ICE1 and ICE2.</text>
</comment>
<comment type="interaction">
    <interactant intactId="EBI-715224">
        <id>Q9HB65</id>
    </interactant>
    <interactant intactId="EBI-769261">
        <id>Q96JC9</id>
        <label>EAF1</label>
    </interactant>
    <organismsDiffer>false</organismsDiffer>
    <experiments>8</experiments>
</comment>
<comment type="subcellular location">
    <subcellularLocation>
        <location evidence="4">Nucleus</location>
    </subcellularLocation>
</comment>
<comment type="alternative products">
    <event type="alternative splicing"/>
    <isoform>
        <id>Q9HB65-1</id>
        <name>1</name>
        <sequence type="displayed"/>
    </isoform>
    <isoform>
        <id>Q9HB65-2</id>
        <name>2</name>
        <sequence type="described" ref="VSP_045937"/>
    </isoform>
</comment>
<comment type="tissue specificity">
    <text evidence="4">Testis specific.</text>
</comment>
<comment type="similarity">
    <text evidence="7">Belongs to the ELL/occludin family.</text>
</comment>
<gene>
    <name type="primary">ELL3</name>
</gene>
<protein>
    <recommendedName>
        <fullName>RNA polymerase II elongation factor ELL3</fullName>
    </recommendedName>
</protein>
<organism evidence="8">
    <name type="scientific">Homo sapiens</name>
    <name type="common">Human</name>
    <dbReference type="NCBI Taxonomy" id="9606"/>
    <lineage>
        <taxon>Eukaryota</taxon>
        <taxon>Metazoa</taxon>
        <taxon>Chordata</taxon>
        <taxon>Craniata</taxon>
        <taxon>Vertebrata</taxon>
        <taxon>Euteleostomi</taxon>
        <taxon>Mammalia</taxon>
        <taxon>Eutheria</taxon>
        <taxon>Euarchontoglires</taxon>
        <taxon>Primates</taxon>
        <taxon>Haplorrhini</taxon>
        <taxon>Catarrhini</taxon>
        <taxon>Hominidae</taxon>
        <taxon>Homo</taxon>
    </lineage>
</organism>
<keyword id="KW-0025">Alternative splicing</keyword>
<keyword id="KW-0539">Nucleus</keyword>
<keyword id="KW-1267">Proteomics identification</keyword>
<keyword id="KW-1185">Reference proteome</keyword>
<keyword id="KW-0804">Transcription</keyword>
<keyword id="KW-0805">Transcription regulation</keyword>
<accession>Q9HB65</accession>
<accession>B3KQ66</accession>
<accession>B3KX08</accession>
<accession>Q6I9Z7</accession>
<accession>Q9H634</accession>
<evidence type="ECO:0000250" key="1"/>
<evidence type="ECO:0000255" key="2">
    <source>
        <dbReference type="PROSITE-ProRule" id="PRU01324"/>
    </source>
</evidence>
<evidence type="ECO:0000256" key="3">
    <source>
        <dbReference type="SAM" id="MobiDB-lite"/>
    </source>
</evidence>
<evidence type="ECO:0000269" key="4">
    <source>
    </source>
</evidence>
<evidence type="ECO:0000269" key="5">
    <source>
    </source>
</evidence>
<evidence type="ECO:0000303" key="6">
    <source>
    </source>
</evidence>
<evidence type="ECO:0000305" key="7"/>
<evidence type="ECO:0000312" key="8">
    <source>
        <dbReference type="EMBL" id="AAG13463.1"/>
    </source>
</evidence>
<evidence type="ECO:0000312" key="9">
    <source>
        <dbReference type="EMBL" id="AAH19293.1"/>
    </source>
</evidence>
<evidence type="ECO:0000312" key="10">
    <source>
        <dbReference type="EMBL" id="BAB15432.1"/>
    </source>
</evidence>
<dbReference type="EMBL" id="AF276512">
    <property type="protein sequence ID" value="AAG13463.1"/>
    <property type="molecule type" value="mRNA"/>
</dbReference>
<dbReference type="EMBL" id="AK026290">
    <property type="protein sequence ID" value="BAB15432.1"/>
    <property type="molecule type" value="mRNA"/>
</dbReference>
<dbReference type="EMBL" id="AK057528">
    <property type="protein sequence ID" value="BAG51928.1"/>
    <property type="molecule type" value="mRNA"/>
</dbReference>
<dbReference type="EMBL" id="AK126384">
    <property type="protein sequence ID" value="BAG54320.1"/>
    <property type="molecule type" value="mRNA"/>
</dbReference>
<dbReference type="EMBL" id="CR457358">
    <property type="protein sequence ID" value="CAG33639.1"/>
    <property type="molecule type" value="mRNA"/>
</dbReference>
<dbReference type="EMBL" id="AC018512">
    <property type="status" value="NOT_ANNOTATED_CDS"/>
    <property type="molecule type" value="Genomic_DNA"/>
</dbReference>
<dbReference type="EMBL" id="CH471082">
    <property type="protein sequence ID" value="EAW77238.1"/>
    <property type="molecule type" value="Genomic_DNA"/>
</dbReference>
<dbReference type="EMBL" id="BC006548">
    <property type="protein sequence ID" value="AAH06548.1"/>
    <property type="molecule type" value="mRNA"/>
</dbReference>
<dbReference type="EMBL" id="BC019293">
    <property type="protein sequence ID" value="AAH19293.1"/>
    <property type="molecule type" value="mRNA"/>
</dbReference>
<dbReference type="CCDS" id="CCDS10102.1">
    <molecule id="Q9HB65-1"/>
</dbReference>
<dbReference type="RefSeq" id="NP_079441.1">
    <molecule id="Q9HB65-1"/>
    <property type="nucleotide sequence ID" value="NM_025165.3"/>
</dbReference>
<dbReference type="SMR" id="Q9HB65"/>
<dbReference type="BioGRID" id="123198">
    <property type="interactions" value="25"/>
</dbReference>
<dbReference type="ComplexPortal" id="CPX-2714">
    <property type="entry name" value="Little elongation complex, ELL3 variant"/>
</dbReference>
<dbReference type="CORUM" id="Q9HB65"/>
<dbReference type="FunCoup" id="Q9HB65">
    <property type="interactions" value="459"/>
</dbReference>
<dbReference type="IntAct" id="Q9HB65">
    <property type="interactions" value="21"/>
</dbReference>
<dbReference type="STRING" id="9606.ENSP00000320346"/>
<dbReference type="iPTMnet" id="Q9HB65"/>
<dbReference type="PhosphoSitePlus" id="Q9HB65"/>
<dbReference type="BioMuta" id="ELL3"/>
<dbReference type="DMDM" id="48428154"/>
<dbReference type="jPOST" id="Q9HB65"/>
<dbReference type="MassIVE" id="Q9HB65"/>
<dbReference type="PaxDb" id="9606-ENSP00000320346"/>
<dbReference type="PeptideAtlas" id="Q9HB65"/>
<dbReference type="ProteomicsDB" id="81498">
    <molecule id="Q9HB65-1"/>
</dbReference>
<dbReference type="Antibodypedia" id="24110">
    <property type="antibodies" value="125 antibodies from 20 providers"/>
</dbReference>
<dbReference type="DNASU" id="80237"/>
<dbReference type="Ensembl" id="ENST00000319359.8">
    <molecule id="Q9HB65-1"/>
    <property type="protein sequence ID" value="ENSP00000320346.3"/>
    <property type="gene ID" value="ENSG00000128886.12"/>
</dbReference>
<dbReference type="GeneID" id="80237"/>
<dbReference type="KEGG" id="hsa:80237"/>
<dbReference type="MANE-Select" id="ENST00000319359.8">
    <property type="protein sequence ID" value="ENSP00000320346.3"/>
    <property type="RefSeq nucleotide sequence ID" value="NM_025165.3"/>
    <property type="RefSeq protein sequence ID" value="NP_079441.1"/>
</dbReference>
<dbReference type="UCSC" id="uc001zsw.2">
    <molecule id="Q9HB65-1"/>
    <property type="organism name" value="human"/>
</dbReference>
<dbReference type="AGR" id="HGNC:23113"/>
<dbReference type="CTD" id="80237"/>
<dbReference type="GeneCards" id="ELL3"/>
<dbReference type="HGNC" id="HGNC:23113">
    <property type="gene designation" value="ELL3"/>
</dbReference>
<dbReference type="HPA" id="ENSG00000128886">
    <property type="expression patterns" value="Group enriched (choroid plexus, intestine, lymphoid tissue, skin, testis)"/>
</dbReference>
<dbReference type="MIM" id="609885">
    <property type="type" value="gene"/>
</dbReference>
<dbReference type="neXtProt" id="NX_Q9HB65"/>
<dbReference type="PharmGKB" id="PA128394728"/>
<dbReference type="VEuPathDB" id="HostDB:ENSG00000128886"/>
<dbReference type="eggNOG" id="KOG4796">
    <property type="taxonomic scope" value="Eukaryota"/>
</dbReference>
<dbReference type="GeneTree" id="ENSGT00940000161615"/>
<dbReference type="HOGENOM" id="CLU_692530_0_0_1"/>
<dbReference type="InParanoid" id="Q9HB65"/>
<dbReference type="OMA" id="SWQNTGN"/>
<dbReference type="OrthoDB" id="6284217at2759"/>
<dbReference type="PAN-GO" id="Q9HB65">
    <property type="GO annotations" value="4 GO annotations based on evolutionary models"/>
</dbReference>
<dbReference type="PhylomeDB" id="Q9HB65"/>
<dbReference type="TreeFam" id="TF337345"/>
<dbReference type="PathwayCommons" id="Q9HB65"/>
<dbReference type="Reactome" id="R-HSA-6807505">
    <property type="pathway name" value="RNA polymerase II transcribes snRNA genes"/>
</dbReference>
<dbReference type="SignaLink" id="Q9HB65"/>
<dbReference type="BioGRID-ORCS" id="80237">
    <property type="hits" value="25 hits in 1157 CRISPR screens"/>
</dbReference>
<dbReference type="GenomeRNAi" id="80237"/>
<dbReference type="Pharos" id="Q9HB65">
    <property type="development level" value="Tbio"/>
</dbReference>
<dbReference type="PRO" id="PR:Q9HB65"/>
<dbReference type="Proteomes" id="UP000005640">
    <property type="component" value="Chromosome 15"/>
</dbReference>
<dbReference type="RNAct" id="Q9HB65">
    <property type="molecule type" value="protein"/>
</dbReference>
<dbReference type="Bgee" id="ENSG00000128886">
    <property type="expression patterns" value="Expressed in duodenum and 99 other cell types or tissues"/>
</dbReference>
<dbReference type="ExpressionAtlas" id="Q9HB65">
    <property type="expression patterns" value="baseline and differential"/>
</dbReference>
<dbReference type="GO" id="GO:0030054">
    <property type="term" value="C:cell junction"/>
    <property type="evidence" value="ECO:0000314"/>
    <property type="project" value="HPA"/>
</dbReference>
<dbReference type="GO" id="GO:0005694">
    <property type="term" value="C:chromosome"/>
    <property type="evidence" value="ECO:0000314"/>
    <property type="project" value="HPA"/>
</dbReference>
<dbReference type="GO" id="GO:0005829">
    <property type="term" value="C:cytosol"/>
    <property type="evidence" value="ECO:0000314"/>
    <property type="project" value="HPA"/>
</dbReference>
<dbReference type="GO" id="GO:0016607">
    <property type="term" value="C:nuclear speck"/>
    <property type="evidence" value="ECO:0000314"/>
    <property type="project" value="HPA"/>
</dbReference>
<dbReference type="GO" id="GO:0005730">
    <property type="term" value="C:nucleolus"/>
    <property type="evidence" value="ECO:0000314"/>
    <property type="project" value="HPA"/>
</dbReference>
<dbReference type="GO" id="GO:0005654">
    <property type="term" value="C:nucleoplasm"/>
    <property type="evidence" value="ECO:0000314"/>
    <property type="project" value="HPA"/>
</dbReference>
<dbReference type="GO" id="GO:0005634">
    <property type="term" value="C:nucleus"/>
    <property type="evidence" value="ECO:0000314"/>
    <property type="project" value="UniProtKB"/>
</dbReference>
<dbReference type="GO" id="GO:0008023">
    <property type="term" value="C:transcription elongation factor complex"/>
    <property type="evidence" value="ECO:0000314"/>
    <property type="project" value="UniProtKB"/>
</dbReference>
<dbReference type="GO" id="GO:0000987">
    <property type="term" value="F:cis-regulatory region sequence-specific DNA binding"/>
    <property type="evidence" value="ECO:0000250"/>
    <property type="project" value="UniProtKB"/>
</dbReference>
<dbReference type="GO" id="GO:0006354">
    <property type="term" value="P:DNA-templated transcription elongation"/>
    <property type="evidence" value="ECO:0000314"/>
    <property type="project" value="UniProtKB"/>
</dbReference>
<dbReference type="GO" id="GO:0042771">
    <property type="term" value="P:intrinsic apoptotic signaling pathway in response to DNA damage by p53 class mediator"/>
    <property type="evidence" value="ECO:0007669"/>
    <property type="project" value="Ensembl"/>
</dbReference>
<dbReference type="GO" id="GO:1902166">
    <property type="term" value="P:negative regulation of intrinsic apoptotic signaling pathway in response to DNA damage by p53 class mediator"/>
    <property type="evidence" value="ECO:0007669"/>
    <property type="project" value="Ensembl"/>
</dbReference>
<dbReference type="GO" id="GO:0061351">
    <property type="term" value="P:neural precursor cell proliferation"/>
    <property type="evidence" value="ECO:0007669"/>
    <property type="project" value="Ensembl"/>
</dbReference>
<dbReference type="GO" id="GO:0032786">
    <property type="term" value="P:positive regulation of DNA-templated transcription, elongation"/>
    <property type="evidence" value="ECO:0000314"/>
    <property type="project" value="UniProtKB"/>
</dbReference>
<dbReference type="GO" id="GO:2000179">
    <property type="term" value="P:positive regulation of neural precursor cell proliferation"/>
    <property type="evidence" value="ECO:0007669"/>
    <property type="project" value="Ensembl"/>
</dbReference>
<dbReference type="GO" id="GO:0050769">
    <property type="term" value="P:positive regulation of neurogenesis"/>
    <property type="evidence" value="ECO:0007669"/>
    <property type="project" value="Ensembl"/>
</dbReference>
<dbReference type="GO" id="GO:2000648">
    <property type="term" value="P:positive regulation of stem cell proliferation"/>
    <property type="evidence" value="ECO:0007669"/>
    <property type="project" value="Ensembl"/>
</dbReference>
<dbReference type="GO" id="GO:0045944">
    <property type="term" value="P:positive regulation of transcription by RNA polymerase II"/>
    <property type="evidence" value="ECO:0000314"/>
    <property type="project" value="UniProtKB"/>
</dbReference>
<dbReference type="GO" id="GO:0032968">
    <property type="term" value="P:positive regulation of transcription elongation by RNA polymerase II"/>
    <property type="evidence" value="ECO:0000318"/>
    <property type="project" value="GO_Central"/>
</dbReference>
<dbReference type="GO" id="GO:0010717">
    <property type="term" value="P:regulation of epithelial to mesenchymal transition"/>
    <property type="evidence" value="ECO:0000250"/>
    <property type="project" value="UniProtKB"/>
</dbReference>
<dbReference type="GO" id="GO:0042795">
    <property type="term" value="P:snRNA transcription by RNA polymerase II"/>
    <property type="evidence" value="ECO:0000315"/>
    <property type="project" value="UniProtKB"/>
</dbReference>
<dbReference type="GO" id="GO:0007283">
    <property type="term" value="P:spermatogenesis"/>
    <property type="evidence" value="ECO:0000303"/>
    <property type="project" value="UniProtKB"/>
</dbReference>
<dbReference type="GO" id="GO:0048863">
    <property type="term" value="P:stem cell differentiation"/>
    <property type="evidence" value="ECO:0000250"/>
    <property type="project" value="UniProtKB"/>
</dbReference>
<dbReference type="GO" id="GO:0072089">
    <property type="term" value="P:stem cell proliferation"/>
    <property type="evidence" value="ECO:0007669"/>
    <property type="project" value="Ensembl"/>
</dbReference>
<dbReference type="GO" id="GO:0006366">
    <property type="term" value="P:transcription by RNA polymerase II"/>
    <property type="evidence" value="ECO:0000250"/>
    <property type="project" value="UniProtKB"/>
</dbReference>
<dbReference type="GO" id="GO:0006368">
    <property type="term" value="P:transcription elongation by RNA polymerase II"/>
    <property type="evidence" value="ECO:0000314"/>
    <property type="project" value="UniProtKB"/>
</dbReference>
<dbReference type="Gene3D" id="6.10.140.340">
    <property type="match status" value="1"/>
</dbReference>
<dbReference type="InterPro" id="IPR031176">
    <property type="entry name" value="ELL/occludin"/>
</dbReference>
<dbReference type="InterPro" id="IPR019464">
    <property type="entry name" value="ELL_N"/>
</dbReference>
<dbReference type="InterPro" id="IPR010844">
    <property type="entry name" value="Occludin_ELL"/>
</dbReference>
<dbReference type="PANTHER" id="PTHR23288">
    <property type="entry name" value="OCCLUDIN AND RNA POLYMERASE II ELONGATION FACTOR ELL"/>
    <property type="match status" value="1"/>
</dbReference>
<dbReference type="PANTHER" id="PTHR23288:SF18">
    <property type="entry name" value="RNA POLYMERASE II ELONGATION FACTOR ELL3"/>
    <property type="match status" value="1"/>
</dbReference>
<dbReference type="Pfam" id="PF10390">
    <property type="entry name" value="ELL"/>
    <property type="match status" value="1"/>
</dbReference>
<dbReference type="Pfam" id="PF07303">
    <property type="entry name" value="Occludin_ELL"/>
    <property type="match status" value="1"/>
</dbReference>
<dbReference type="SUPFAM" id="SSF144292">
    <property type="entry name" value="occludin/ELL-like"/>
    <property type="match status" value="1"/>
</dbReference>
<dbReference type="PROSITE" id="PS51980">
    <property type="entry name" value="OCEL"/>
    <property type="match status" value="1"/>
</dbReference>
<sequence length="397" mass="45361">MEELQEPLRGQLRLCFTQAARTSLLLLRLNDAALRALQECQRQQVRPVIAFQGHRGYLRLPGPGWSCLFSFIVSQCCQEGAGGSLDLVCQRFLRSGPNSLHCLGSLRERLIIWAAMDSIPAPSSVQGHNLTEDARHPESWQNTGGYSEGDAVSQPQMALEEVSVSDPLASNQGQSLPGSSREHMAQWEVRSQTHVPNREPVQALPSSASRKRLDKKRSVPVATVELEEKRFRTLPLVPSPLQGLTNQDLQEGEDWEQEDEDMDPRLEHSSSVQEDSESPSPEDIPDYLLQYRAIHSAEQQHAYEQDFETDYAEYRILHARVGTASQRFIELGAEIKRVRRGTPEYKVLEDKIIQEYKKFRKQYPSYREEKRRCEYLHQKLSHIKGLILEFEEKNRGS</sequence>
<reference evidence="7" key="1">
    <citation type="journal article" date="2000" name="J. Biol. Chem.">
        <title>Identification, cloning, expression, and biochemical characterization of the testis-specific RNA polymerase II elongation factor ELL3.</title>
        <authorList>
            <person name="Miller T."/>
            <person name="Williams K."/>
            <person name="Johnstone R.W."/>
            <person name="Shilatifard A."/>
        </authorList>
    </citation>
    <scope>NUCLEOTIDE SEQUENCE [MRNA] (ISOFORM 1)</scope>
    <scope>FUNCTION</scope>
    <scope>SUBCELLULAR LOCATION</scope>
    <scope>TISSUE SPECIFICITY</scope>
</reference>
<reference evidence="7" key="2">
    <citation type="journal article" date="2004" name="Nat. Genet.">
        <title>Complete sequencing and characterization of 21,243 full-length human cDNAs.</title>
        <authorList>
            <person name="Ota T."/>
            <person name="Suzuki Y."/>
            <person name="Nishikawa T."/>
            <person name="Otsuki T."/>
            <person name="Sugiyama T."/>
            <person name="Irie R."/>
            <person name="Wakamatsu A."/>
            <person name="Hayashi K."/>
            <person name="Sato H."/>
            <person name="Nagai K."/>
            <person name="Kimura K."/>
            <person name="Makita H."/>
            <person name="Sekine M."/>
            <person name="Obayashi M."/>
            <person name="Nishi T."/>
            <person name="Shibahara T."/>
            <person name="Tanaka T."/>
            <person name="Ishii S."/>
            <person name="Yamamoto J."/>
            <person name="Saito K."/>
            <person name="Kawai Y."/>
            <person name="Isono Y."/>
            <person name="Nakamura Y."/>
            <person name="Nagahari K."/>
            <person name="Murakami K."/>
            <person name="Yasuda T."/>
            <person name="Iwayanagi T."/>
            <person name="Wagatsuma M."/>
            <person name="Shiratori A."/>
            <person name="Sudo H."/>
            <person name="Hosoiri T."/>
            <person name="Kaku Y."/>
            <person name="Kodaira H."/>
            <person name="Kondo H."/>
            <person name="Sugawara M."/>
            <person name="Takahashi M."/>
            <person name="Kanda K."/>
            <person name="Yokoi T."/>
            <person name="Furuya T."/>
            <person name="Kikkawa E."/>
            <person name="Omura Y."/>
            <person name="Abe K."/>
            <person name="Kamihara K."/>
            <person name="Katsuta N."/>
            <person name="Sato K."/>
            <person name="Tanikawa M."/>
            <person name="Yamazaki M."/>
            <person name="Ninomiya K."/>
            <person name="Ishibashi T."/>
            <person name="Yamashita H."/>
            <person name="Murakawa K."/>
            <person name="Fujimori K."/>
            <person name="Tanai H."/>
            <person name="Kimata M."/>
            <person name="Watanabe M."/>
            <person name="Hiraoka S."/>
            <person name="Chiba Y."/>
            <person name="Ishida S."/>
            <person name="Ono Y."/>
            <person name="Takiguchi S."/>
            <person name="Watanabe S."/>
            <person name="Yosida M."/>
            <person name="Hotuta T."/>
            <person name="Kusano J."/>
            <person name="Kanehori K."/>
            <person name="Takahashi-Fujii A."/>
            <person name="Hara H."/>
            <person name="Tanase T.-O."/>
            <person name="Nomura Y."/>
            <person name="Togiya S."/>
            <person name="Komai F."/>
            <person name="Hara R."/>
            <person name="Takeuchi K."/>
            <person name="Arita M."/>
            <person name="Imose N."/>
            <person name="Musashino K."/>
            <person name="Yuuki H."/>
            <person name="Oshima A."/>
            <person name="Sasaki N."/>
            <person name="Aotsuka S."/>
            <person name="Yoshikawa Y."/>
            <person name="Matsunawa H."/>
            <person name="Ichihara T."/>
            <person name="Shiohata N."/>
            <person name="Sano S."/>
            <person name="Moriya S."/>
            <person name="Momiyama H."/>
            <person name="Satoh N."/>
            <person name="Takami S."/>
            <person name="Terashima Y."/>
            <person name="Suzuki O."/>
            <person name="Nakagawa S."/>
            <person name="Senoh A."/>
            <person name="Mizoguchi H."/>
            <person name="Goto Y."/>
            <person name="Shimizu F."/>
            <person name="Wakebe H."/>
            <person name="Hishigaki H."/>
            <person name="Watanabe T."/>
            <person name="Sugiyama A."/>
            <person name="Takemoto M."/>
            <person name="Kawakami B."/>
            <person name="Yamazaki M."/>
            <person name="Watanabe K."/>
            <person name="Kumagai A."/>
            <person name="Itakura S."/>
            <person name="Fukuzumi Y."/>
            <person name="Fujimori Y."/>
            <person name="Komiyama M."/>
            <person name="Tashiro H."/>
            <person name="Tanigami A."/>
            <person name="Fujiwara T."/>
            <person name="Ono T."/>
            <person name="Yamada K."/>
            <person name="Fujii Y."/>
            <person name="Ozaki K."/>
            <person name="Hirao M."/>
            <person name="Ohmori Y."/>
            <person name="Kawabata A."/>
            <person name="Hikiji T."/>
            <person name="Kobatake N."/>
            <person name="Inagaki H."/>
            <person name="Ikema Y."/>
            <person name="Okamoto S."/>
            <person name="Okitani R."/>
            <person name="Kawakami T."/>
            <person name="Noguchi S."/>
            <person name="Itoh T."/>
            <person name="Shigeta K."/>
            <person name="Senba T."/>
            <person name="Matsumura K."/>
            <person name="Nakajima Y."/>
            <person name="Mizuno T."/>
            <person name="Morinaga M."/>
            <person name="Sasaki M."/>
            <person name="Togashi T."/>
            <person name="Oyama M."/>
            <person name="Hata H."/>
            <person name="Watanabe M."/>
            <person name="Komatsu T."/>
            <person name="Mizushima-Sugano J."/>
            <person name="Satoh T."/>
            <person name="Shirai Y."/>
            <person name="Takahashi Y."/>
            <person name="Nakagawa K."/>
            <person name="Okumura K."/>
            <person name="Nagase T."/>
            <person name="Nomura N."/>
            <person name="Kikuchi H."/>
            <person name="Masuho Y."/>
            <person name="Yamashita R."/>
            <person name="Nakai K."/>
            <person name="Yada T."/>
            <person name="Nakamura Y."/>
            <person name="Ohara O."/>
            <person name="Isogai T."/>
            <person name="Sugano S."/>
        </authorList>
    </citation>
    <scope>NUCLEOTIDE SEQUENCE [LARGE SCALE MRNA] (ISOFORMS 1 AND 2)</scope>
    <source>
        <tissue evidence="10">Small intestine</tissue>
        <tissue>Testis</tissue>
        <tissue>Uterus</tissue>
    </source>
</reference>
<reference key="3">
    <citation type="submission" date="2004-06" db="EMBL/GenBank/DDBJ databases">
        <title>Cloning of human full open reading frames in Gateway(TM) system entry vector (pDONR201).</title>
        <authorList>
            <person name="Ebert L."/>
            <person name="Schick M."/>
            <person name="Neubert P."/>
            <person name="Schatten R."/>
            <person name="Henze S."/>
            <person name="Korn B."/>
        </authorList>
    </citation>
    <scope>NUCLEOTIDE SEQUENCE [LARGE SCALE MRNA] (ISOFORM 1)</scope>
</reference>
<reference key="4">
    <citation type="journal article" date="2006" name="Nature">
        <title>Analysis of the DNA sequence and duplication history of human chromosome 15.</title>
        <authorList>
            <person name="Zody M.C."/>
            <person name="Garber M."/>
            <person name="Sharpe T."/>
            <person name="Young S.K."/>
            <person name="Rowen L."/>
            <person name="O'Neill K."/>
            <person name="Whittaker C.A."/>
            <person name="Kamal M."/>
            <person name="Chang J.L."/>
            <person name="Cuomo C.A."/>
            <person name="Dewar K."/>
            <person name="FitzGerald M.G."/>
            <person name="Kodira C.D."/>
            <person name="Madan A."/>
            <person name="Qin S."/>
            <person name="Yang X."/>
            <person name="Abbasi N."/>
            <person name="Abouelleil A."/>
            <person name="Arachchi H.M."/>
            <person name="Baradarani L."/>
            <person name="Birditt B."/>
            <person name="Bloom S."/>
            <person name="Bloom T."/>
            <person name="Borowsky M.L."/>
            <person name="Burke J."/>
            <person name="Butler J."/>
            <person name="Cook A."/>
            <person name="DeArellano K."/>
            <person name="DeCaprio D."/>
            <person name="Dorris L. III"/>
            <person name="Dors M."/>
            <person name="Eichler E.E."/>
            <person name="Engels R."/>
            <person name="Fahey J."/>
            <person name="Fleetwood P."/>
            <person name="Friedman C."/>
            <person name="Gearin G."/>
            <person name="Hall J.L."/>
            <person name="Hensley G."/>
            <person name="Johnson E."/>
            <person name="Jones C."/>
            <person name="Kamat A."/>
            <person name="Kaur A."/>
            <person name="Locke D.P."/>
            <person name="Madan A."/>
            <person name="Munson G."/>
            <person name="Jaffe D.B."/>
            <person name="Lui A."/>
            <person name="Macdonald P."/>
            <person name="Mauceli E."/>
            <person name="Naylor J.W."/>
            <person name="Nesbitt R."/>
            <person name="Nicol R."/>
            <person name="O'Leary S.B."/>
            <person name="Ratcliffe A."/>
            <person name="Rounsley S."/>
            <person name="She X."/>
            <person name="Sneddon K.M.B."/>
            <person name="Stewart S."/>
            <person name="Sougnez C."/>
            <person name="Stone S.M."/>
            <person name="Topham K."/>
            <person name="Vincent D."/>
            <person name="Wang S."/>
            <person name="Zimmer A.R."/>
            <person name="Birren B.W."/>
            <person name="Hood L."/>
            <person name="Lander E.S."/>
            <person name="Nusbaum C."/>
        </authorList>
    </citation>
    <scope>NUCLEOTIDE SEQUENCE [LARGE SCALE GENOMIC DNA]</scope>
</reference>
<reference key="5">
    <citation type="submission" date="2005-07" db="EMBL/GenBank/DDBJ databases">
        <authorList>
            <person name="Mural R.J."/>
            <person name="Istrail S."/>
            <person name="Sutton G.G."/>
            <person name="Florea L."/>
            <person name="Halpern A.L."/>
            <person name="Mobarry C.M."/>
            <person name="Lippert R."/>
            <person name="Walenz B."/>
            <person name="Shatkay H."/>
            <person name="Dew I."/>
            <person name="Miller J.R."/>
            <person name="Flanigan M.J."/>
            <person name="Edwards N.J."/>
            <person name="Bolanos R."/>
            <person name="Fasulo D."/>
            <person name="Halldorsson B.V."/>
            <person name="Hannenhalli S."/>
            <person name="Turner R."/>
            <person name="Yooseph S."/>
            <person name="Lu F."/>
            <person name="Nusskern D.R."/>
            <person name="Shue B.C."/>
            <person name="Zheng X.H."/>
            <person name="Zhong F."/>
            <person name="Delcher A.L."/>
            <person name="Huson D.H."/>
            <person name="Kravitz S.A."/>
            <person name="Mouchard L."/>
            <person name="Reinert K."/>
            <person name="Remington K.A."/>
            <person name="Clark A.G."/>
            <person name="Waterman M.S."/>
            <person name="Eichler E.E."/>
            <person name="Adams M.D."/>
            <person name="Hunkapiller M.W."/>
            <person name="Myers E.W."/>
            <person name="Venter J.C."/>
        </authorList>
    </citation>
    <scope>NUCLEOTIDE SEQUENCE [LARGE SCALE GENOMIC DNA]</scope>
</reference>
<reference evidence="7" key="6">
    <citation type="journal article" date="2004" name="Genome Res.">
        <title>The status, quality, and expansion of the NIH full-length cDNA project: the Mammalian Gene Collection (MGC).</title>
        <authorList>
            <consortium name="The MGC Project Team"/>
        </authorList>
    </citation>
    <scope>NUCLEOTIDE SEQUENCE [LARGE SCALE MRNA] (ISOFORM 1)</scope>
    <source>
        <tissue evidence="9">Lung</tissue>
    </source>
</reference>
<reference key="7">
    <citation type="journal article" date="2011" name="Mol. Cell">
        <title>The little elongation complex regulates small nuclear RNA transcription.</title>
        <authorList>
            <person name="Smith E.R."/>
            <person name="Lin C."/>
            <person name="Garrett A.S."/>
            <person name="Thornton J."/>
            <person name="Mohaghegh N."/>
            <person name="Hu D."/>
            <person name="Jackson J."/>
            <person name="Saraf A."/>
            <person name="Swanson S.K."/>
            <person name="Seidel C."/>
            <person name="Florens L."/>
            <person name="Washburn M.P."/>
            <person name="Eissenberg J.C."/>
            <person name="Shilatifard A."/>
        </authorList>
    </citation>
    <scope>FUNCTION</scope>
    <scope>IDENTIFICATION IN THE SEC COMPLEX</scope>
    <scope>IDENTIFICATION IN THE LEC COMPLEX</scope>
</reference>
<reference key="8">
    <citation type="journal article" date="2012" name="Nat. Rev. Mol. Cell Biol.">
        <title>The super elongation complex (SEC) family in transcriptional control.</title>
        <authorList>
            <person name="Luo Z."/>
            <person name="Lin C."/>
            <person name="Shilatifard A."/>
        </authorList>
    </citation>
    <scope>REVIEW ON THE SUPER ELONGATION COMPLEX</scope>
</reference>
<feature type="chain" id="PRO_0000146736" description="RNA polymerase II elongation factor ELL3">
    <location>
        <begin position="1"/>
        <end position="397"/>
    </location>
</feature>
<feature type="domain" description="OCEL" evidence="2">
    <location>
        <begin position="285"/>
        <end position="395"/>
    </location>
</feature>
<feature type="region of interest" description="Disordered" evidence="3">
    <location>
        <begin position="164"/>
        <end position="219"/>
    </location>
</feature>
<feature type="region of interest" description="Disordered" evidence="3">
    <location>
        <begin position="237"/>
        <end position="284"/>
    </location>
</feature>
<feature type="compositionally biased region" description="Polar residues" evidence="3">
    <location>
        <begin position="168"/>
        <end position="178"/>
    </location>
</feature>
<feature type="compositionally biased region" description="Acidic residues" evidence="3">
    <location>
        <begin position="250"/>
        <end position="262"/>
    </location>
</feature>
<feature type="compositionally biased region" description="Low complexity" evidence="3">
    <location>
        <begin position="269"/>
        <end position="281"/>
    </location>
</feature>
<feature type="splice variant" id="VSP_045937" description="In isoform 2." evidence="6">
    <original>MEELQEPLRGQLRLCFTQAARTSLLLLRLNDAALRALQECQRQQVRPVIAFQGHRG</original>
    <variation>MGLTVSFHPQ</variation>
    <location>
        <begin position="1"/>
        <end position="56"/>
    </location>
</feature>
<feature type="sequence variant" id="VAR_018992" description="In dbSNP:rs2277531.">
    <original>Q</original>
    <variation>E</variation>
    <location>
        <position position="11"/>
    </location>
</feature>
<feature type="sequence variant" id="VAR_053074" description="In dbSNP:rs35454865.">
    <original>W</original>
    <variation>R</variation>
    <location>
        <position position="140"/>
    </location>
</feature>
<feature type="sequence conflict" description="In Ref. 1; AAG13463." evidence="7" ref="1">
    <original>Q</original>
    <variation>H</variation>
    <location>
        <position position="5"/>
    </location>
</feature>
<feature type="sequence conflict" description="In Ref. 2; BAG54320." evidence="7" ref="2">
    <original>S</original>
    <variation>P</variation>
    <location>
        <position position="278"/>
    </location>
</feature>
<proteinExistence type="evidence at protein level"/>
<name>ELL3_HUMAN</name>